<comment type="subunit">
    <text evidence="1">Part of the 50S ribosomal subunit.</text>
</comment>
<comment type="subcellular location">
    <subcellularLocation>
        <location>Plastid</location>
        <location>Chloroplast</location>
    </subcellularLocation>
</comment>
<comment type="similarity">
    <text evidence="1">Belongs to the universal ribosomal protein uL16 family.</text>
</comment>
<gene>
    <name evidence="1" type="primary">rpl16</name>
</gene>
<geneLocation type="chloroplast"/>
<name>RK16_LOBMA</name>
<feature type="chain" id="PRO_0000354643" description="Large ribosomal subunit protein uL16c">
    <location>
        <begin position="1"/>
        <end position="135"/>
    </location>
</feature>
<accession>A4QLN1</accession>
<protein>
    <recommendedName>
        <fullName evidence="1">Large ribosomal subunit protein uL16c</fullName>
    </recommendedName>
    <alternativeName>
        <fullName evidence="2">50S ribosomal protein L16, chloroplastic</fullName>
    </alternativeName>
</protein>
<proteinExistence type="inferred from homology"/>
<sequence length="135" mass="15294">MLSPKRTRFRKQHRGRLKGISSRGNRICFGRYALQTLEPAWITSRQIEAGRRAMTRNVRRGGKIWVRIFPDKPVTVRPAETRMGSGKGSPEYWVAVVKPGKILYEMGGVPENIARKAISIAASKMPIKTQFIISE</sequence>
<reference key="1">
    <citation type="submission" date="2007-03" db="EMBL/GenBank/DDBJ databases">
        <title>Sequencing analysis of Lobularia maritima chloroplast DNA.</title>
        <authorList>
            <person name="Hosouchi T."/>
            <person name="Tsuruoka H."/>
            <person name="Kotani H."/>
        </authorList>
    </citation>
    <scope>NUCLEOTIDE SEQUENCE [LARGE SCALE GENOMIC DNA]</scope>
</reference>
<keyword id="KW-0150">Chloroplast</keyword>
<keyword id="KW-0934">Plastid</keyword>
<keyword id="KW-0687">Ribonucleoprotein</keyword>
<keyword id="KW-0689">Ribosomal protein</keyword>
<dbReference type="EMBL" id="AP009375">
    <property type="protein sequence ID" value="BAF50586.1"/>
    <property type="molecule type" value="Genomic_DNA"/>
</dbReference>
<dbReference type="RefSeq" id="YP_001123762.1">
    <property type="nucleotide sequence ID" value="NC_009274.1"/>
</dbReference>
<dbReference type="SMR" id="A4QLN1"/>
<dbReference type="GeneID" id="4964840"/>
<dbReference type="GO" id="GO:0009507">
    <property type="term" value="C:chloroplast"/>
    <property type="evidence" value="ECO:0007669"/>
    <property type="project" value="UniProtKB-SubCell"/>
</dbReference>
<dbReference type="GO" id="GO:0005762">
    <property type="term" value="C:mitochondrial large ribosomal subunit"/>
    <property type="evidence" value="ECO:0007669"/>
    <property type="project" value="TreeGrafter"/>
</dbReference>
<dbReference type="GO" id="GO:0019843">
    <property type="term" value="F:rRNA binding"/>
    <property type="evidence" value="ECO:0007669"/>
    <property type="project" value="InterPro"/>
</dbReference>
<dbReference type="GO" id="GO:0003735">
    <property type="term" value="F:structural constituent of ribosome"/>
    <property type="evidence" value="ECO:0007669"/>
    <property type="project" value="InterPro"/>
</dbReference>
<dbReference type="GO" id="GO:0032543">
    <property type="term" value="P:mitochondrial translation"/>
    <property type="evidence" value="ECO:0007669"/>
    <property type="project" value="TreeGrafter"/>
</dbReference>
<dbReference type="CDD" id="cd01433">
    <property type="entry name" value="Ribosomal_L16_L10e"/>
    <property type="match status" value="1"/>
</dbReference>
<dbReference type="FunFam" id="3.90.1170.10:FF:000001">
    <property type="entry name" value="50S ribosomal protein L16"/>
    <property type="match status" value="1"/>
</dbReference>
<dbReference type="Gene3D" id="3.90.1170.10">
    <property type="entry name" value="Ribosomal protein L10e/L16"/>
    <property type="match status" value="1"/>
</dbReference>
<dbReference type="HAMAP" id="MF_01342">
    <property type="entry name" value="Ribosomal_uL16"/>
    <property type="match status" value="1"/>
</dbReference>
<dbReference type="InterPro" id="IPR047873">
    <property type="entry name" value="Ribosomal_uL16"/>
</dbReference>
<dbReference type="InterPro" id="IPR000114">
    <property type="entry name" value="Ribosomal_uL16_bact-type"/>
</dbReference>
<dbReference type="InterPro" id="IPR020798">
    <property type="entry name" value="Ribosomal_uL16_CS"/>
</dbReference>
<dbReference type="InterPro" id="IPR016180">
    <property type="entry name" value="Ribosomal_uL16_dom"/>
</dbReference>
<dbReference type="InterPro" id="IPR036920">
    <property type="entry name" value="Ribosomal_uL16_sf"/>
</dbReference>
<dbReference type="NCBIfam" id="TIGR01164">
    <property type="entry name" value="rplP_bact"/>
    <property type="match status" value="1"/>
</dbReference>
<dbReference type="PANTHER" id="PTHR12220">
    <property type="entry name" value="50S/60S RIBOSOMAL PROTEIN L16"/>
    <property type="match status" value="1"/>
</dbReference>
<dbReference type="PANTHER" id="PTHR12220:SF13">
    <property type="entry name" value="LARGE RIBOSOMAL SUBUNIT PROTEIN UL16M"/>
    <property type="match status" value="1"/>
</dbReference>
<dbReference type="Pfam" id="PF00252">
    <property type="entry name" value="Ribosomal_L16"/>
    <property type="match status" value="1"/>
</dbReference>
<dbReference type="PRINTS" id="PR00060">
    <property type="entry name" value="RIBOSOMALL16"/>
</dbReference>
<dbReference type="SUPFAM" id="SSF54686">
    <property type="entry name" value="Ribosomal protein L16p/L10e"/>
    <property type="match status" value="1"/>
</dbReference>
<dbReference type="PROSITE" id="PS00586">
    <property type="entry name" value="RIBOSOMAL_L16_1"/>
    <property type="match status" value="1"/>
</dbReference>
<dbReference type="PROSITE" id="PS00701">
    <property type="entry name" value="RIBOSOMAL_L16_2"/>
    <property type="match status" value="1"/>
</dbReference>
<evidence type="ECO:0000255" key="1">
    <source>
        <dbReference type="HAMAP-Rule" id="MF_01342"/>
    </source>
</evidence>
<evidence type="ECO:0000305" key="2"/>
<organism>
    <name type="scientific">Lobularia maritima</name>
    <name type="common">Sweet alyssum</name>
    <name type="synonym">Alyssum maritimum</name>
    <dbReference type="NCBI Taxonomy" id="226051"/>
    <lineage>
        <taxon>Eukaryota</taxon>
        <taxon>Viridiplantae</taxon>
        <taxon>Streptophyta</taxon>
        <taxon>Embryophyta</taxon>
        <taxon>Tracheophyta</taxon>
        <taxon>Spermatophyta</taxon>
        <taxon>Magnoliopsida</taxon>
        <taxon>eudicotyledons</taxon>
        <taxon>Gunneridae</taxon>
        <taxon>Pentapetalae</taxon>
        <taxon>rosids</taxon>
        <taxon>malvids</taxon>
        <taxon>Brassicales</taxon>
        <taxon>Brassicaceae</taxon>
        <taxon>Anastaticeae</taxon>
        <taxon>Lobularia</taxon>
    </lineage>
</organism>